<reference key="1">
    <citation type="journal article" date="1999" name="Nature">
        <title>Evidence for lateral gene transfer between Archaea and Bacteria from genome sequence of Thermotoga maritima.</title>
        <authorList>
            <person name="Nelson K.E."/>
            <person name="Clayton R.A."/>
            <person name="Gill S.R."/>
            <person name="Gwinn M.L."/>
            <person name="Dodson R.J."/>
            <person name="Haft D.H."/>
            <person name="Hickey E.K."/>
            <person name="Peterson J.D."/>
            <person name="Nelson W.C."/>
            <person name="Ketchum K.A."/>
            <person name="McDonald L.A."/>
            <person name="Utterback T.R."/>
            <person name="Malek J.A."/>
            <person name="Linher K.D."/>
            <person name="Garrett M.M."/>
            <person name="Stewart A.M."/>
            <person name="Cotton M.D."/>
            <person name="Pratt M.S."/>
            <person name="Phillips C.A."/>
            <person name="Richardson D.L."/>
            <person name="Heidelberg J.F."/>
            <person name="Sutton G.G."/>
            <person name="Fleischmann R.D."/>
            <person name="Eisen J.A."/>
            <person name="White O."/>
            <person name="Salzberg S.L."/>
            <person name="Smith H.O."/>
            <person name="Venter J.C."/>
            <person name="Fraser C.M."/>
        </authorList>
    </citation>
    <scope>NUCLEOTIDE SEQUENCE [LARGE SCALE GENOMIC DNA]</scope>
    <source>
        <strain>ATCC 43589 / DSM 3109 / JCM 10099 / NBRC 100826 / MSB8</strain>
    </source>
</reference>
<proteinExistence type="inferred from homology"/>
<sequence length="599" mass="67418">MSISEKPLSELLRPKDFEDFVGQDHIFGNKGILRRTLKTGNMFSSILYGPPGSGKTSVFSLLKRYFNGEVVYLSSTVHGVSEIKNVLKRGEQLRKYGKKLLLFLDEIHRLNKNQQMVLVSHVERGDIVLVATTTENPSFVIVPALLSRCRILYFKKLSDEDLMKILKKATEVLNIDLEESVEKAIVRHSEGDARKLLNTLEIVHQAFKNKRVTLEDLETLLGNVSGYTKESHYDFASAFIKSMRGSDPNAAVYYLVKMIEMGEDPRFIARRMIIFASEDVGLADPNALHIAVSTSIAVEHVGLPECLMNLVECAVYLSLAPKSNSVYLAMKKVQELPVEDVPLFLRNPVTEEMKKRGYGEGYLYPHDFGGFVKTNYLPEKLKNEVIFQPKRVGFEEELFERLRKLWPEKYGGESMAEVRKELEYKGKKIRIVKGDITREEVDAIVNAANEYLKHGGGVAGAIVRAGGSVIQEESDRIVQERGRVPTGEAVVTSAGKLKAKYVIHTVGPVWRGGSHGEDELLYKAVYNALLRAHELKLKSISMPAISTGIFGFPKERAVGIFSKAIRDFIDQHPDTTLEEIRICNIDEETTKIFEEKFSV</sequence>
<name>Y508_THEMA</name>
<feature type="chain" id="PRO_0000089221" description="Uncharacterized protein TM_0508">
    <location>
        <begin position="1"/>
        <end position="599"/>
    </location>
</feature>
<feature type="domain" description="Macro" evidence="2">
    <location>
        <begin position="416"/>
        <end position="599"/>
    </location>
</feature>
<feature type="binding site" evidence="1">
    <location>
        <begin position="49"/>
        <end position="56"/>
    </location>
    <ligand>
        <name>ATP</name>
        <dbReference type="ChEBI" id="CHEBI:30616"/>
    </ligand>
</feature>
<gene>
    <name type="ordered locus">TM_0508</name>
</gene>
<protein>
    <recommendedName>
        <fullName>Uncharacterized protein TM_0508</fullName>
    </recommendedName>
</protein>
<comment type="similarity">
    <text evidence="3">In the N-terminal section; belongs to the AAA ATPase family. RarA/MGS1/WRNIP1 subfamily.</text>
</comment>
<organism>
    <name type="scientific">Thermotoga maritima (strain ATCC 43589 / DSM 3109 / JCM 10099 / NBRC 100826 / MSB8)</name>
    <dbReference type="NCBI Taxonomy" id="243274"/>
    <lineage>
        <taxon>Bacteria</taxon>
        <taxon>Thermotogati</taxon>
        <taxon>Thermotogota</taxon>
        <taxon>Thermotogae</taxon>
        <taxon>Thermotogales</taxon>
        <taxon>Thermotogaceae</taxon>
        <taxon>Thermotoga</taxon>
    </lineage>
</organism>
<accession>Q9WYX8</accession>
<keyword id="KW-0067">ATP-binding</keyword>
<keyword id="KW-0547">Nucleotide-binding</keyword>
<keyword id="KW-1185">Reference proteome</keyword>
<evidence type="ECO:0000255" key="1"/>
<evidence type="ECO:0000255" key="2">
    <source>
        <dbReference type="PROSITE-ProRule" id="PRU00490"/>
    </source>
</evidence>
<evidence type="ECO:0000305" key="3"/>
<dbReference type="EMBL" id="AE000512">
    <property type="protein sequence ID" value="AAD35593.1"/>
    <property type="molecule type" value="Genomic_DNA"/>
</dbReference>
<dbReference type="PIR" id="B72368">
    <property type="entry name" value="B72368"/>
</dbReference>
<dbReference type="RefSeq" id="NP_228318.1">
    <property type="nucleotide sequence ID" value="NC_000853.1"/>
</dbReference>
<dbReference type="RefSeq" id="WP_004081432.1">
    <property type="nucleotide sequence ID" value="NC_000853.1"/>
</dbReference>
<dbReference type="SMR" id="Q9WYX8"/>
<dbReference type="FunCoup" id="Q9WYX8">
    <property type="interactions" value="323"/>
</dbReference>
<dbReference type="STRING" id="243274.TM_0508"/>
<dbReference type="PaxDb" id="243274-THEMA_02135"/>
<dbReference type="EnsemblBacteria" id="AAD35593">
    <property type="protein sequence ID" value="AAD35593"/>
    <property type="gene ID" value="TM_0508"/>
</dbReference>
<dbReference type="KEGG" id="tma:TM0508"/>
<dbReference type="KEGG" id="tmi:THEMA_02135"/>
<dbReference type="KEGG" id="tmm:Tmari_0504"/>
<dbReference type="KEGG" id="tmw:THMA_0520"/>
<dbReference type="eggNOG" id="COG2110">
    <property type="taxonomic scope" value="Bacteria"/>
</dbReference>
<dbReference type="eggNOG" id="COG2256">
    <property type="taxonomic scope" value="Bacteria"/>
</dbReference>
<dbReference type="InParanoid" id="Q9WYX8"/>
<dbReference type="OrthoDB" id="9778364at2"/>
<dbReference type="Proteomes" id="UP000008183">
    <property type="component" value="Chromosome"/>
</dbReference>
<dbReference type="GO" id="GO:0005524">
    <property type="term" value="F:ATP binding"/>
    <property type="evidence" value="ECO:0007669"/>
    <property type="project" value="UniProtKB-KW"/>
</dbReference>
<dbReference type="GO" id="GO:0016887">
    <property type="term" value="F:ATP hydrolysis activity"/>
    <property type="evidence" value="ECO:0007669"/>
    <property type="project" value="InterPro"/>
</dbReference>
<dbReference type="GO" id="GO:0003677">
    <property type="term" value="F:DNA binding"/>
    <property type="evidence" value="ECO:0007669"/>
    <property type="project" value="InterPro"/>
</dbReference>
<dbReference type="GO" id="GO:0008047">
    <property type="term" value="F:enzyme activator activity"/>
    <property type="evidence" value="ECO:0000318"/>
    <property type="project" value="GO_Central"/>
</dbReference>
<dbReference type="GO" id="GO:0009378">
    <property type="term" value="F:four-way junction helicase activity"/>
    <property type="evidence" value="ECO:0007669"/>
    <property type="project" value="InterPro"/>
</dbReference>
<dbReference type="GO" id="GO:0017116">
    <property type="term" value="F:single-stranded DNA helicase activity"/>
    <property type="evidence" value="ECO:0000318"/>
    <property type="project" value="GO_Central"/>
</dbReference>
<dbReference type="GO" id="GO:0006310">
    <property type="term" value="P:DNA recombination"/>
    <property type="evidence" value="ECO:0007669"/>
    <property type="project" value="InterPro"/>
</dbReference>
<dbReference type="GO" id="GO:0000731">
    <property type="term" value="P:DNA synthesis involved in DNA repair"/>
    <property type="evidence" value="ECO:0000318"/>
    <property type="project" value="GO_Central"/>
</dbReference>
<dbReference type="GO" id="GO:0006261">
    <property type="term" value="P:DNA-templated DNA replication"/>
    <property type="evidence" value="ECO:0000318"/>
    <property type="project" value="GO_Central"/>
</dbReference>
<dbReference type="CDD" id="cd00009">
    <property type="entry name" value="AAA"/>
    <property type="match status" value="1"/>
</dbReference>
<dbReference type="CDD" id="cd18139">
    <property type="entry name" value="HLD_clamp_RarA"/>
    <property type="match status" value="1"/>
</dbReference>
<dbReference type="CDD" id="cd02907">
    <property type="entry name" value="Macro_Af1521_BAL-like"/>
    <property type="match status" value="1"/>
</dbReference>
<dbReference type="FunFam" id="1.10.3710.10:FF:000013">
    <property type="entry name" value="ATPase, AAA family"/>
    <property type="match status" value="1"/>
</dbReference>
<dbReference type="FunFam" id="1.20.272.10:FF:000001">
    <property type="entry name" value="Putative AAA family ATPase"/>
    <property type="match status" value="1"/>
</dbReference>
<dbReference type="Gene3D" id="1.10.8.60">
    <property type="match status" value="1"/>
</dbReference>
<dbReference type="Gene3D" id="1.20.272.10">
    <property type="match status" value="1"/>
</dbReference>
<dbReference type="Gene3D" id="1.10.3710.10">
    <property type="entry name" value="DNA polymerase III clamp loader subunits, C-terminal domain"/>
    <property type="match status" value="1"/>
</dbReference>
<dbReference type="Gene3D" id="3.40.220.10">
    <property type="entry name" value="Leucine Aminopeptidase, subunit E, domain 1"/>
    <property type="match status" value="1"/>
</dbReference>
<dbReference type="Gene3D" id="3.40.50.300">
    <property type="entry name" value="P-loop containing nucleotide triphosphate hydrolases"/>
    <property type="match status" value="1"/>
</dbReference>
<dbReference type="InterPro" id="IPR003593">
    <property type="entry name" value="AAA+_ATPase"/>
</dbReference>
<dbReference type="InterPro" id="IPR032423">
    <property type="entry name" value="AAA_assoc_2"/>
</dbReference>
<dbReference type="InterPro" id="IPR051314">
    <property type="entry name" value="AAA_ATPase_RarA/MGS1/WRNIP1"/>
</dbReference>
<dbReference type="InterPro" id="IPR008921">
    <property type="entry name" value="DNA_pol3_clamp-load_cplx_C"/>
</dbReference>
<dbReference type="InterPro" id="IPR002589">
    <property type="entry name" value="Macro_dom"/>
</dbReference>
<dbReference type="InterPro" id="IPR043472">
    <property type="entry name" value="Macro_dom-like"/>
</dbReference>
<dbReference type="InterPro" id="IPR021886">
    <property type="entry name" value="MgsA_C"/>
</dbReference>
<dbReference type="InterPro" id="IPR027417">
    <property type="entry name" value="P-loop_NTPase"/>
</dbReference>
<dbReference type="InterPro" id="IPR008824">
    <property type="entry name" value="RuvB-like_N"/>
</dbReference>
<dbReference type="NCBIfam" id="NF009880">
    <property type="entry name" value="PRK13341.1-1"/>
    <property type="match status" value="1"/>
</dbReference>
<dbReference type="PANTHER" id="PTHR13779:SF7">
    <property type="entry name" value="ATPASE WRNIP1"/>
    <property type="match status" value="1"/>
</dbReference>
<dbReference type="PANTHER" id="PTHR13779">
    <property type="entry name" value="WERNER HELICASE-INTERACTING PROTEIN 1 FAMILY MEMBER"/>
    <property type="match status" value="1"/>
</dbReference>
<dbReference type="Pfam" id="PF16193">
    <property type="entry name" value="AAA_assoc_2"/>
    <property type="match status" value="1"/>
</dbReference>
<dbReference type="Pfam" id="PF01661">
    <property type="entry name" value="Macro"/>
    <property type="match status" value="1"/>
</dbReference>
<dbReference type="Pfam" id="PF12002">
    <property type="entry name" value="MgsA_C"/>
    <property type="match status" value="1"/>
</dbReference>
<dbReference type="Pfam" id="PF05496">
    <property type="entry name" value="RuvB_N"/>
    <property type="match status" value="1"/>
</dbReference>
<dbReference type="SMART" id="SM00506">
    <property type="entry name" value="A1pp"/>
    <property type="match status" value="1"/>
</dbReference>
<dbReference type="SMART" id="SM00382">
    <property type="entry name" value="AAA"/>
    <property type="match status" value="1"/>
</dbReference>
<dbReference type="SUPFAM" id="SSF52949">
    <property type="entry name" value="Macro domain-like"/>
    <property type="match status" value="1"/>
</dbReference>
<dbReference type="SUPFAM" id="SSF52540">
    <property type="entry name" value="P-loop containing nucleoside triphosphate hydrolases"/>
    <property type="match status" value="1"/>
</dbReference>
<dbReference type="SUPFAM" id="SSF48019">
    <property type="entry name" value="post-AAA+ oligomerization domain-like"/>
    <property type="match status" value="1"/>
</dbReference>
<dbReference type="PROSITE" id="PS51154">
    <property type="entry name" value="MACRO"/>
    <property type="match status" value="1"/>
</dbReference>